<accession>B5RH47</accession>
<protein>
    <recommendedName>
        <fullName evidence="1">Ribosomal RNA small subunit methyltransferase B</fullName>
        <ecNumber evidence="1">2.1.1.176</ecNumber>
    </recommendedName>
    <alternativeName>
        <fullName evidence="1">16S rRNA m5C967 methyltransferase</fullName>
    </alternativeName>
    <alternativeName>
        <fullName evidence="1">rRNA (cytosine-C(5)-)-methyltransferase RsmB</fullName>
    </alternativeName>
</protein>
<name>RSMB_SALG2</name>
<reference key="1">
    <citation type="journal article" date="2008" name="Genome Res.">
        <title>Comparative genome analysis of Salmonella enteritidis PT4 and Salmonella gallinarum 287/91 provides insights into evolutionary and host adaptation pathways.</title>
        <authorList>
            <person name="Thomson N.R."/>
            <person name="Clayton D.J."/>
            <person name="Windhorst D."/>
            <person name="Vernikos G."/>
            <person name="Davidson S."/>
            <person name="Churcher C."/>
            <person name="Quail M.A."/>
            <person name="Stevens M."/>
            <person name="Jones M.A."/>
            <person name="Watson M."/>
            <person name="Barron A."/>
            <person name="Layton A."/>
            <person name="Pickard D."/>
            <person name="Kingsley R.A."/>
            <person name="Bignell A."/>
            <person name="Clark L."/>
            <person name="Harris B."/>
            <person name="Ormond D."/>
            <person name="Abdellah Z."/>
            <person name="Brooks K."/>
            <person name="Cherevach I."/>
            <person name="Chillingworth T."/>
            <person name="Woodward J."/>
            <person name="Norberczak H."/>
            <person name="Lord A."/>
            <person name="Arrowsmith C."/>
            <person name="Jagels K."/>
            <person name="Moule S."/>
            <person name="Mungall K."/>
            <person name="Saunders M."/>
            <person name="Whitehead S."/>
            <person name="Chabalgoity J.A."/>
            <person name="Maskell D."/>
            <person name="Humphreys T."/>
            <person name="Roberts M."/>
            <person name="Barrow P.A."/>
            <person name="Dougan G."/>
            <person name="Parkhill J."/>
        </authorList>
    </citation>
    <scope>NUCLEOTIDE SEQUENCE [LARGE SCALE GENOMIC DNA]</scope>
    <source>
        <strain>287/91 / NCTC 13346</strain>
    </source>
</reference>
<dbReference type="EC" id="2.1.1.176" evidence="1"/>
<dbReference type="EMBL" id="AM933173">
    <property type="protein sequence ID" value="CAR39801.1"/>
    <property type="molecule type" value="Genomic_DNA"/>
</dbReference>
<dbReference type="RefSeq" id="WP_000744594.1">
    <property type="nucleotide sequence ID" value="NC_011274.1"/>
</dbReference>
<dbReference type="SMR" id="B5RH47"/>
<dbReference type="KEGG" id="seg:SG4030"/>
<dbReference type="HOGENOM" id="CLU_005316_0_4_6"/>
<dbReference type="Proteomes" id="UP000008321">
    <property type="component" value="Chromosome"/>
</dbReference>
<dbReference type="GO" id="GO:0005829">
    <property type="term" value="C:cytosol"/>
    <property type="evidence" value="ECO:0007669"/>
    <property type="project" value="TreeGrafter"/>
</dbReference>
<dbReference type="GO" id="GO:0003723">
    <property type="term" value="F:RNA binding"/>
    <property type="evidence" value="ECO:0007669"/>
    <property type="project" value="UniProtKB-KW"/>
</dbReference>
<dbReference type="GO" id="GO:0009383">
    <property type="term" value="F:rRNA (cytosine-C5-)-methyltransferase activity"/>
    <property type="evidence" value="ECO:0007669"/>
    <property type="project" value="TreeGrafter"/>
</dbReference>
<dbReference type="GO" id="GO:0006355">
    <property type="term" value="P:regulation of DNA-templated transcription"/>
    <property type="evidence" value="ECO:0007669"/>
    <property type="project" value="InterPro"/>
</dbReference>
<dbReference type="GO" id="GO:0070475">
    <property type="term" value="P:rRNA base methylation"/>
    <property type="evidence" value="ECO:0007669"/>
    <property type="project" value="TreeGrafter"/>
</dbReference>
<dbReference type="CDD" id="cd02440">
    <property type="entry name" value="AdoMet_MTases"/>
    <property type="match status" value="1"/>
</dbReference>
<dbReference type="CDD" id="cd00620">
    <property type="entry name" value="Methyltransferase_Sun"/>
    <property type="match status" value="1"/>
</dbReference>
<dbReference type="FunFam" id="1.10.287.730:FF:000001">
    <property type="entry name" value="Ribosomal RNA small subunit methyltransferase B"/>
    <property type="match status" value="1"/>
</dbReference>
<dbReference type="FunFam" id="1.10.940.10:FF:000002">
    <property type="entry name" value="Ribosomal RNA small subunit methyltransferase B"/>
    <property type="match status" value="1"/>
</dbReference>
<dbReference type="FunFam" id="3.30.70.1170:FF:000002">
    <property type="entry name" value="Ribosomal RNA small subunit methyltransferase B"/>
    <property type="match status" value="1"/>
</dbReference>
<dbReference type="FunFam" id="3.40.50.150:FF:000022">
    <property type="entry name" value="Ribosomal RNA small subunit methyltransferase B"/>
    <property type="match status" value="1"/>
</dbReference>
<dbReference type="Gene3D" id="1.10.287.730">
    <property type="entry name" value="Helix hairpin bin"/>
    <property type="match status" value="1"/>
</dbReference>
<dbReference type="Gene3D" id="1.10.940.10">
    <property type="entry name" value="NusB-like"/>
    <property type="match status" value="1"/>
</dbReference>
<dbReference type="Gene3D" id="3.30.70.1170">
    <property type="entry name" value="Sun protein, domain 3"/>
    <property type="match status" value="1"/>
</dbReference>
<dbReference type="Gene3D" id="3.40.50.150">
    <property type="entry name" value="Vaccinia Virus protein VP39"/>
    <property type="match status" value="1"/>
</dbReference>
<dbReference type="HAMAP" id="MF_01856">
    <property type="entry name" value="16SrRNA_methyltr_B"/>
    <property type="match status" value="1"/>
</dbReference>
<dbReference type="InterPro" id="IPR049560">
    <property type="entry name" value="MeTrfase_RsmB-F_NOP2_cat"/>
</dbReference>
<dbReference type="InterPro" id="IPR001678">
    <property type="entry name" value="MeTrfase_RsmB-F_NOP2_dom"/>
</dbReference>
<dbReference type="InterPro" id="IPR035926">
    <property type="entry name" value="NusB-like_sf"/>
</dbReference>
<dbReference type="InterPro" id="IPR006027">
    <property type="entry name" value="NusB_RsmB_TIM44"/>
</dbReference>
<dbReference type="InterPro" id="IPR023267">
    <property type="entry name" value="RCMT"/>
</dbReference>
<dbReference type="InterPro" id="IPR004573">
    <property type="entry name" value="rRNA_ssu_MeTfrase_B"/>
</dbReference>
<dbReference type="InterPro" id="IPR023541">
    <property type="entry name" value="rRNA_ssu_MeTfrase_B_ent"/>
</dbReference>
<dbReference type="InterPro" id="IPR054728">
    <property type="entry name" value="RsmB-like_ferredoxin"/>
</dbReference>
<dbReference type="InterPro" id="IPR048019">
    <property type="entry name" value="RsmB-like_N"/>
</dbReference>
<dbReference type="InterPro" id="IPR018314">
    <property type="entry name" value="RsmB/NOL1/NOP2-like_CS"/>
</dbReference>
<dbReference type="InterPro" id="IPR029063">
    <property type="entry name" value="SAM-dependent_MTases_sf"/>
</dbReference>
<dbReference type="NCBIfam" id="NF008149">
    <property type="entry name" value="PRK10901.1"/>
    <property type="match status" value="1"/>
</dbReference>
<dbReference type="NCBIfam" id="NF011494">
    <property type="entry name" value="PRK14902.1"/>
    <property type="match status" value="1"/>
</dbReference>
<dbReference type="NCBIfam" id="TIGR00563">
    <property type="entry name" value="rsmB"/>
    <property type="match status" value="1"/>
</dbReference>
<dbReference type="PANTHER" id="PTHR22807:SF61">
    <property type="entry name" value="NOL1_NOP2_SUN FAMILY PROTEIN _ ANTITERMINATION NUSB DOMAIN-CONTAINING PROTEIN"/>
    <property type="match status" value="1"/>
</dbReference>
<dbReference type="PANTHER" id="PTHR22807">
    <property type="entry name" value="NOP2 YEAST -RELATED NOL1/NOP2/FMU SUN DOMAIN-CONTAINING"/>
    <property type="match status" value="1"/>
</dbReference>
<dbReference type="Pfam" id="PF01189">
    <property type="entry name" value="Methyltr_RsmB-F"/>
    <property type="match status" value="1"/>
</dbReference>
<dbReference type="Pfam" id="PF01029">
    <property type="entry name" value="NusB"/>
    <property type="match status" value="1"/>
</dbReference>
<dbReference type="Pfam" id="PF22458">
    <property type="entry name" value="RsmF-B_ferredox"/>
    <property type="match status" value="1"/>
</dbReference>
<dbReference type="PRINTS" id="PR02008">
    <property type="entry name" value="RCMTFAMILY"/>
</dbReference>
<dbReference type="SUPFAM" id="SSF48013">
    <property type="entry name" value="NusB-like"/>
    <property type="match status" value="1"/>
</dbReference>
<dbReference type="SUPFAM" id="SSF53335">
    <property type="entry name" value="S-adenosyl-L-methionine-dependent methyltransferases"/>
    <property type="match status" value="1"/>
</dbReference>
<dbReference type="PROSITE" id="PS01153">
    <property type="entry name" value="NOL1_NOP2_SUN"/>
    <property type="match status" value="1"/>
</dbReference>
<dbReference type="PROSITE" id="PS51686">
    <property type="entry name" value="SAM_MT_RSMB_NOP"/>
    <property type="match status" value="1"/>
</dbReference>
<organism>
    <name type="scientific">Salmonella gallinarum (strain 287/91 / NCTC 13346)</name>
    <dbReference type="NCBI Taxonomy" id="550538"/>
    <lineage>
        <taxon>Bacteria</taxon>
        <taxon>Pseudomonadati</taxon>
        <taxon>Pseudomonadota</taxon>
        <taxon>Gammaproteobacteria</taxon>
        <taxon>Enterobacterales</taxon>
        <taxon>Enterobacteriaceae</taxon>
        <taxon>Salmonella</taxon>
    </lineage>
</organism>
<comment type="function">
    <text evidence="1">Specifically methylates the cytosine at position 967 (m5C967) of 16S rRNA.</text>
</comment>
<comment type="catalytic activity">
    <reaction evidence="1">
        <text>cytidine(967) in 16S rRNA + S-adenosyl-L-methionine = 5-methylcytidine(967) in 16S rRNA + S-adenosyl-L-homocysteine + H(+)</text>
        <dbReference type="Rhea" id="RHEA:42748"/>
        <dbReference type="Rhea" id="RHEA-COMP:10219"/>
        <dbReference type="Rhea" id="RHEA-COMP:10220"/>
        <dbReference type="ChEBI" id="CHEBI:15378"/>
        <dbReference type="ChEBI" id="CHEBI:57856"/>
        <dbReference type="ChEBI" id="CHEBI:59789"/>
        <dbReference type="ChEBI" id="CHEBI:74483"/>
        <dbReference type="ChEBI" id="CHEBI:82748"/>
        <dbReference type="EC" id="2.1.1.176"/>
    </reaction>
</comment>
<comment type="subcellular location">
    <subcellularLocation>
        <location evidence="1">Cytoplasm</location>
    </subcellularLocation>
</comment>
<comment type="similarity">
    <text evidence="1">Belongs to the class I-like SAM-binding methyltransferase superfamily. RsmB/NOP family.</text>
</comment>
<sequence>MKKQNNLRSLAAQAVELVVEQGQSLSNVLPPLQQKVADKDKALLQELCFGVLRTLSQLEWLINKLMSRPMTGKQRTVHYLIMVGFYQLLYTRVPPHAALAETVEGAVAIKRPQLKGLINGVLRQFQRQQETLLNEFATSDARFLHPGWLVKRLQNAYPTQWQHIIEANNQRPPMWLRVNRTHHTRDGWLGLLEDAGMKGYPHPDYPDAVRLETPAPVHALPGFAEGWVTVQDASAQGCAVFLAPQNGEHILDLCAAPGGKTTHILEVAPEADVLAVDIDEQRLSRVYDNLKRLGMKATVKQGDGRYPAQWCGEQQFDRILLDAPCSATGVIRRHPDIKWLRRDRDIAELAQLQAEILDAVWPRLKPGGTLVYATCSVLPEENRDQIKTFLQRTPDAALSETGTPDQPGQQNLPGGEEGDGFFYAKLIKK</sequence>
<proteinExistence type="inferred from homology"/>
<gene>
    <name evidence="1" type="primary">rsmB</name>
    <name evidence="1" type="synonym">sun</name>
    <name type="ordered locus">SG4030</name>
</gene>
<keyword id="KW-0963">Cytoplasm</keyword>
<keyword id="KW-0489">Methyltransferase</keyword>
<keyword id="KW-0694">RNA-binding</keyword>
<keyword id="KW-0698">rRNA processing</keyword>
<keyword id="KW-0949">S-adenosyl-L-methionine</keyword>
<keyword id="KW-0808">Transferase</keyword>
<feature type="chain" id="PRO_0000366168" description="Ribosomal RNA small subunit methyltransferase B">
    <location>
        <begin position="1"/>
        <end position="429"/>
    </location>
</feature>
<feature type="region of interest" description="Disordered" evidence="2">
    <location>
        <begin position="397"/>
        <end position="419"/>
    </location>
</feature>
<feature type="compositionally biased region" description="Polar residues" evidence="2">
    <location>
        <begin position="400"/>
        <end position="412"/>
    </location>
</feature>
<feature type="active site" description="Nucleophile" evidence="1">
    <location>
        <position position="375"/>
    </location>
</feature>
<feature type="binding site" evidence="1">
    <location>
        <begin position="254"/>
        <end position="260"/>
    </location>
    <ligand>
        <name>S-adenosyl-L-methionine</name>
        <dbReference type="ChEBI" id="CHEBI:59789"/>
    </ligand>
</feature>
<feature type="binding site" evidence="1">
    <location>
        <position position="277"/>
    </location>
    <ligand>
        <name>S-adenosyl-L-methionine</name>
        <dbReference type="ChEBI" id="CHEBI:59789"/>
    </ligand>
</feature>
<feature type="binding site" evidence="1">
    <location>
        <position position="303"/>
    </location>
    <ligand>
        <name>S-adenosyl-L-methionine</name>
        <dbReference type="ChEBI" id="CHEBI:59789"/>
    </ligand>
</feature>
<feature type="binding site" evidence="1">
    <location>
        <position position="322"/>
    </location>
    <ligand>
        <name>S-adenosyl-L-methionine</name>
        <dbReference type="ChEBI" id="CHEBI:59789"/>
    </ligand>
</feature>
<evidence type="ECO:0000255" key="1">
    <source>
        <dbReference type="HAMAP-Rule" id="MF_01856"/>
    </source>
</evidence>
<evidence type="ECO:0000256" key="2">
    <source>
        <dbReference type="SAM" id="MobiDB-lite"/>
    </source>
</evidence>